<organism>
    <name type="scientific">Mycoplasmopsis synoviae (strain 53)</name>
    <name type="common">Mycoplasma synoviae</name>
    <dbReference type="NCBI Taxonomy" id="262723"/>
    <lineage>
        <taxon>Bacteria</taxon>
        <taxon>Bacillati</taxon>
        <taxon>Mycoplasmatota</taxon>
        <taxon>Mycoplasmoidales</taxon>
        <taxon>Metamycoplasmataceae</taxon>
        <taxon>Mycoplasmopsis</taxon>
    </lineage>
</organism>
<proteinExistence type="inferred from homology"/>
<accession>Q4A5Q4</accession>
<evidence type="ECO:0000255" key="1">
    <source>
        <dbReference type="HAMAP-Rule" id="MF_01726"/>
    </source>
</evidence>
<keyword id="KW-0067">ATP-binding</keyword>
<keyword id="KW-1003">Cell membrane</keyword>
<keyword id="KW-0472">Membrane</keyword>
<keyword id="KW-0547">Nucleotide-binding</keyword>
<keyword id="KW-1185">Reference proteome</keyword>
<keyword id="KW-1278">Translocase</keyword>
<keyword id="KW-0813">Transport</keyword>
<name>POTA_MYCS5</name>
<sequence length="459" mass="53974">MQNNTTKSVKNNNVIELIDIVKQFDEKLVLDNVNLNIKRGEFVTLLGPSGSGKTTILRLIGGFEWATRGEIKFNGVDIKDLSPHKRNLSTIFQDYALFPHLNVEGNIMYGLKLKRVPKENVKKEHKNLLERKIKVWTEKAQREMKNLDKLQEEYENELKVLKPGTYKHQKRQTWLDDSDFKYSYWESYVLQKTEEFKNKYFKRKLTKEEIDQTVDKIVNLVGLQNNKNKKITELSGGMKQRVALARSLIIEPEILLLDEPLSALDAKIREKMQVFLKQIQQELKLTFIFVTHDQDEALELSDRIAVIREGKIEQYDTPKQIYDYPRNIWVAKFIGNSNIFNAKFLKDSKVELLNKEFKTIHDEDEFAVDEEVDALIRPEDIDIVNQTQNTEHKIKGKIVESIYRGSYYYIKVELKDSNYIFVETAKNFAVDETVYLSWTIDSIHLMKKDPKWDYAKKDF</sequence>
<dbReference type="EC" id="7.6.2.11" evidence="1"/>
<dbReference type="EMBL" id="AE017245">
    <property type="protein sequence ID" value="AAZ43917.2"/>
    <property type="molecule type" value="Genomic_DNA"/>
</dbReference>
<dbReference type="RefSeq" id="WP_050703145.1">
    <property type="nucleotide sequence ID" value="NC_007294.1"/>
</dbReference>
<dbReference type="SMR" id="Q4A5Q4"/>
<dbReference type="STRING" id="262723.MS53_0508"/>
<dbReference type="KEGG" id="msy:MS53_0508"/>
<dbReference type="eggNOG" id="COG3839">
    <property type="taxonomic scope" value="Bacteria"/>
</dbReference>
<dbReference type="HOGENOM" id="CLU_000604_1_1_14"/>
<dbReference type="OrthoDB" id="9802264at2"/>
<dbReference type="Proteomes" id="UP000000549">
    <property type="component" value="Chromosome"/>
</dbReference>
<dbReference type="GO" id="GO:0043190">
    <property type="term" value="C:ATP-binding cassette (ABC) transporter complex"/>
    <property type="evidence" value="ECO:0007669"/>
    <property type="project" value="InterPro"/>
</dbReference>
<dbReference type="GO" id="GO:0015417">
    <property type="term" value="F:ABC-type polyamine transporter activity"/>
    <property type="evidence" value="ECO:0007669"/>
    <property type="project" value="UniProtKB-EC"/>
</dbReference>
<dbReference type="GO" id="GO:0005524">
    <property type="term" value="F:ATP binding"/>
    <property type="evidence" value="ECO:0007669"/>
    <property type="project" value="UniProtKB-KW"/>
</dbReference>
<dbReference type="GO" id="GO:0016887">
    <property type="term" value="F:ATP hydrolysis activity"/>
    <property type="evidence" value="ECO:0007669"/>
    <property type="project" value="InterPro"/>
</dbReference>
<dbReference type="Gene3D" id="2.40.50.100">
    <property type="match status" value="1"/>
</dbReference>
<dbReference type="Gene3D" id="3.40.50.300">
    <property type="entry name" value="P-loop containing nucleotide triphosphate hydrolases"/>
    <property type="match status" value="2"/>
</dbReference>
<dbReference type="InterPro" id="IPR003593">
    <property type="entry name" value="AAA+_ATPase"/>
</dbReference>
<dbReference type="InterPro" id="IPR050093">
    <property type="entry name" value="ABC_SmlMolc_Importer"/>
</dbReference>
<dbReference type="InterPro" id="IPR003439">
    <property type="entry name" value="ABC_transporter-like_ATP-bd"/>
</dbReference>
<dbReference type="InterPro" id="IPR017871">
    <property type="entry name" value="ABC_transporter-like_CS"/>
</dbReference>
<dbReference type="InterPro" id="IPR008995">
    <property type="entry name" value="Mo/tungstate-bd_C_term_dom"/>
</dbReference>
<dbReference type="InterPro" id="IPR027417">
    <property type="entry name" value="P-loop_NTPase"/>
</dbReference>
<dbReference type="InterPro" id="IPR013611">
    <property type="entry name" value="Transp-assoc_OB_typ2"/>
</dbReference>
<dbReference type="PANTHER" id="PTHR42781">
    <property type="entry name" value="SPERMIDINE/PUTRESCINE IMPORT ATP-BINDING PROTEIN POTA"/>
    <property type="match status" value="1"/>
</dbReference>
<dbReference type="PANTHER" id="PTHR42781:SF4">
    <property type="entry name" value="SPERMIDINE_PUTRESCINE IMPORT ATP-BINDING PROTEIN POTA"/>
    <property type="match status" value="1"/>
</dbReference>
<dbReference type="Pfam" id="PF00005">
    <property type="entry name" value="ABC_tran"/>
    <property type="match status" value="1"/>
</dbReference>
<dbReference type="Pfam" id="PF08402">
    <property type="entry name" value="TOBE_2"/>
    <property type="match status" value="1"/>
</dbReference>
<dbReference type="SMART" id="SM00382">
    <property type="entry name" value="AAA"/>
    <property type="match status" value="1"/>
</dbReference>
<dbReference type="SUPFAM" id="SSF50331">
    <property type="entry name" value="MOP-like"/>
    <property type="match status" value="1"/>
</dbReference>
<dbReference type="SUPFAM" id="SSF52540">
    <property type="entry name" value="P-loop containing nucleoside triphosphate hydrolases"/>
    <property type="match status" value="1"/>
</dbReference>
<dbReference type="PROSITE" id="PS00211">
    <property type="entry name" value="ABC_TRANSPORTER_1"/>
    <property type="match status" value="1"/>
</dbReference>
<dbReference type="PROSITE" id="PS50893">
    <property type="entry name" value="ABC_TRANSPORTER_2"/>
    <property type="match status" value="1"/>
</dbReference>
<dbReference type="PROSITE" id="PS51305">
    <property type="entry name" value="POTA"/>
    <property type="match status" value="1"/>
</dbReference>
<protein>
    <recommendedName>
        <fullName evidence="1">Spermidine/putrescine import ATP-binding protein PotA</fullName>
        <ecNumber evidence="1">7.6.2.11</ecNumber>
    </recommendedName>
</protein>
<comment type="function">
    <text evidence="1">Part of the ABC transporter complex PotABCD involved in spermidine/putrescine import. Responsible for energy coupling to the transport system.</text>
</comment>
<comment type="catalytic activity">
    <reaction evidence="1">
        <text>ATP + H2O + polyamine-[polyamine-binding protein]Side 1 = ADP + phosphate + polyamineSide 2 + [polyamine-binding protein]Side 1.</text>
        <dbReference type="EC" id="7.6.2.11"/>
    </reaction>
</comment>
<comment type="subunit">
    <text evidence="1">The complex is composed of two ATP-binding proteins (PotA), two transmembrane proteins (PotB and PotC) and a solute-binding protein (PotD).</text>
</comment>
<comment type="subcellular location">
    <subcellularLocation>
        <location evidence="1">Cell membrane</location>
        <topology evidence="1">Peripheral membrane protein</topology>
    </subcellularLocation>
</comment>
<comment type="similarity">
    <text evidence="1">Belongs to the ABC transporter superfamily. Spermidine/putrescine importer (TC 3.A.1.11.1) family.</text>
</comment>
<reference key="1">
    <citation type="journal article" date="2005" name="J. Bacteriol.">
        <title>Swine and poultry pathogens: the complete genome sequences of two strains of Mycoplasma hyopneumoniae and a strain of Mycoplasma synoviae.</title>
        <authorList>
            <person name="Vasconcelos A.T.R."/>
            <person name="Ferreira H.B."/>
            <person name="Bizarro C.V."/>
            <person name="Bonatto S.L."/>
            <person name="Carvalho M.O."/>
            <person name="Pinto P.M."/>
            <person name="Almeida D.F."/>
            <person name="Almeida L.G.P."/>
            <person name="Almeida R."/>
            <person name="Alves-Junior L."/>
            <person name="Assuncao E.N."/>
            <person name="Azevedo V.A.C."/>
            <person name="Bogo M.R."/>
            <person name="Brigido M.M."/>
            <person name="Brocchi M."/>
            <person name="Burity H.A."/>
            <person name="Camargo A.A."/>
            <person name="Camargo S.S."/>
            <person name="Carepo M.S."/>
            <person name="Carraro D.M."/>
            <person name="de Mattos Cascardo J.C."/>
            <person name="Castro L.A."/>
            <person name="Cavalcanti G."/>
            <person name="Chemale G."/>
            <person name="Collevatti R.G."/>
            <person name="Cunha C.W."/>
            <person name="Dallagiovanna B."/>
            <person name="Dambros B.P."/>
            <person name="Dellagostin O.A."/>
            <person name="Falcao C."/>
            <person name="Fantinatti-Garboggini F."/>
            <person name="Felipe M.S.S."/>
            <person name="Fiorentin L."/>
            <person name="Franco G.R."/>
            <person name="Freitas N.S.A."/>
            <person name="Frias D."/>
            <person name="Grangeiro T.B."/>
            <person name="Grisard E.C."/>
            <person name="Guimaraes C.T."/>
            <person name="Hungria M."/>
            <person name="Jardim S.N."/>
            <person name="Krieger M.A."/>
            <person name="Laurino J.P."/>
            <person name="Lima L.F.A."/>
            <person name="Lopes M.I."/>
            <person name="Loreto E.L.S."/>
            <person name="Madeira H.M.F."/>
            <person name="Manfio G.P."/>
            <person name="Maranhao A.Q."/>
            <person name="Martinkovics C.T."/>
            <person name="Medeiros S.R.B."/>
            <person name="Moreira M.A.M."/>
            <person name="Neiva M."/>
            <person name="Ramalho-Neto C.E."/>
            <person name="Nicolas M.F."/>
            <person name="Oliveira S.C."/>
            <person name="Paixao R.F.C."/>
            <person name="Pedrosa F.O."/>
            <person name="Pena S.D.J."/>
            <person name="Pereira M."/>
            <person name="Pereira-Ferrari L."/>
            <person name="Piffer I."/>
            <person name="Pinto L.S."/>
            <person name="Potrich D.P."/>
            <person name="Salim A.C.M."/>
            <person name="Santos F.R."/>
            <person name="Schmitt R."/>
            <person name="Schneider M.P.C."/>
            <person name="Schrank A."/>
            <person name="Schrank I.S."/>
            <person name="Schuck A.F."/>
            <person name="Seuanez H.N."/>
            <person name="Silva D.W."/>
            <person name="Silva R."/>
            <person name="Silva S.C."/>
            <person name="Soares C.M.A."/>
            <person name="Souza K.R.L."/>
            <person name="Souza R.C."/>
            <person name="Staats C.C."/>
            <person name="Steffens M.B.R."/>
            <person name="Teixeira S.M.R."/>
            <person name="Urmenyi T.P."/>
            <person name="Vainstein M.H."/>
            <person name="Zuccherato L.W."/>
            <person name="Simpson A.J.G."/>
            <person name="Zaha A."/>
        </authorList>
    </citation>
    <scope>NUCLEOTIDE SEQUENCE [LARGE SCALE GENOMIC DNA]</scope>
    <source>
        <strain>53</strain>
    </source>
</reference>
<gene>
    <name evidence="1" type="primary">potA</name>
    <name type="ordered locus">MS53_0508</name>
</gene>
<feature type="chain" id="PRO_0000286263" description="Spermidine/putrescine import ATP-binding protein PotA">
    <location>
        <begin position="1"/>
        <end position="459"/>
    </location>
</feature>
<feature type="domain" description="ABC transporter" evidence="1">
    <location>
        <begin position="15"/>
        <end position="334"/>
    </location>
</feature>
<feature type="region of interest" description="Insert">
    <location>
        <begin position="115"/>
        <end position="203"/>
    </location>
</feature>
<feature type="binding site" evidence="1">
    <location>
        <begin position="47"/>
        <end position="54"/>
    </location>
    <ligand>
        <name>ATP</name>
        <dbReference type="ChEBI" id="CHEBI:30616"/>
    </ligand>
</feature>